<dbReference type="EC" id="2.8.1.4" evidence="1"/>
<dbReference type="EMBL" id="CP000918">
    <property type="protein sequence ID" value="ACO17489.1"/>
    <property type="molecule type" value="Genomic_DNA"/>
</dbReference>
<dbReference type="RefSeq" id="WP_001200068.1">
    <property type="nucleotide sequence ID" value="NC_012468.1"/>
</dbReference>
<dbReference type="SMR" id="C1C6L4"/>
<dbReference type="KEGG" id="snm:SP70585_0919"/>
<dbReference type="HOGENOM" id="CLU_037952_4_0_9"/>
<dbReference type="UniPathway" id="UPA00060"/>
<dbReference type="Proteomes" id="UP000002211">
    <property type="component" value="Chromosome"/>
</dbReference>
<dbReference type="GO" id="GO:0005829">
    <property type="term" value="C:cytosol"/>
    <property type="evidence" value="ECO:0007669"/>
    <property type="project" value="TreeGrafter"/>
</dbReference>
<dbReference type="GO" id="GO:0005524">
    <property type="term" value="F:ATP binding"/>
    <property type="evidence" value="ECO:0007669"/>
    <property type="project" value="UniProtKB-UniRule"/>
</dbReference>
<dbReference type="GO" id="GO:0004810">
    <property type="term" value="F:CCA tRNA nucleotidyltransferase activity"/>
    <property type="evidence" value="ECO:0007669"/>
    <property type="project" value="InterPro"/>
</dbReference>
<dbReference type="GO" id="GO:0000049">
    <property type="term" value="F:tRNA binding"/>
    <property type="evidence" value="ECO:0007669"/>
    <property type="project" value="UniProtKB-UniRule"/>
</dbReference>
<dbReference type="GO" id="GO:0140741">
    <property type="term" value="F:tRNA-uracil-4 sulfurtransferase activity"/>
    <property type="evidence" value="ECO:0007669"/>
    <property type="project" value="UniProtKB-EC"/>
</dbReference>
<dbReference type="GO" id="GO:0009228">
    <property type="term" value="P:thiamine biosynthetic process"/>
    <property type="evidence" value="ECO:0007669"/>
    <property type="project" value="UniProtKB-KW"/>
</dbReference>
<dbReference type="GO" id="GO:0009229">
    <property type="term" value="P:thiamine diphosphate biosynthetic process"/>
    <property type="evidence" value="ECO:0007669"/>
    <property type="project" value="UniProtKB-UniRule"/>
</dbReference>
<dbReference type="GO" id="GO:0052837">
    <property type="term" value="P:thiazole biosynthetic process"/>
    <property type="evidence" value="ECO:0007669"/>
    <property type="project" value="TreeGrafter"/>
</dbReference>
<dbReference type="GO" id="GO:0002937">
    <property type="term" value="P:tRNA 4-thiouridine biosynthesis"/>
    <property type="evidence" value="ECO:0007669"/>
    <property type="project" value="TreeGrafter"/>
</dbReference>
<dbReference type="CDD" id="cd01712">
    <property type="entry name" value="PPase_ThiI"/>
    <property type="match status" value="1"/>
</dbReference>
<dbReference type="CDD" id="cd11716">
    <property type="entry name" value="THUMP_ThiI"/>
    <property type="match status" value="1"/>
</dbReference>
<dbReference type="FunFam" id="3.30.2130.30:FF:000006">
    <property type="entry name" value="Probable tRNA sulfurtransferase"/>
    <property type="match status" value="1"/>
</dbReference>
<dbReference type="FunFam" id="3.40.50.620:FF:000053">
    <property type="entry name" value="Probable tRNA sulfurtransferase"/>
    <property type="match status" value="1"/>
</dbReference>
<dbReference type="Gene3D" id="3.30.2130.30">
    <property type="match status" value="1"/>
</dbReference>
<dbReference type="Gene3D" id="3.40.50.620">
    <property type="entry name" value="HUPs"/>
    <property type="match status" value="1"/>
</dbReference>
<dbReference type="HAMAP" id="MF_00021">
    <property type="entry name" value="ThiI"/>
    <property type="match status" value="1"/>
</dbReference>
<dbReference type="InterPro" id="IPR014729">
    <property type="entry name" value="Rossmann-like_a/b/a_fold"/>
</dbReference>
<dbReference type="InterPro" id="IPR020536">
    <property type="entry name" value="ThiI_AANH"/>
</dbReference>
<dbReference type="InterPro" id="IPR054173">
    <property type="entry name" value="ThiI_fer"/>
</dbReference>
<dbReference type="InterPro" id="IPR049961">
    <property type="entry name" value="ThiI_N"/>
</dbReference>
<dbReference type="InterPro" id="IPR004114">
    <property type="entry name" value="THUMP_dom"/>
</dbReference>
<dbReference type="InterPro" id="IPR049962">
    <property type="entry name" value="THUMP_ThiI"/>
</dbReference>
<dbReference type="InterPro" id="IPR003720">
    <property type="entry name" value="tRNA_STrfase"/>
</dbReference>
<dbReference type="InterPro" id="IPR050102">
    <property type="entry name" value="tRNA_sulfurtransferase_ThiI"/>
</dbReference>
<dbReference type="NCBIfam" id="TIGR00342">
    <property type="entry name" value="tRNA uracil 4-sulfurtransferase ThiI"/>
    <property type="match status" value="1"/>
</dbReference>
<dbReference type="PANTHER" id="PTHR43209">
    <property type="entry name" value="TRNA SULFURTRANSFERASE"/>
    <property type="match status" value="1"/>
</dbReference>
<dbReference type="PANTHER" id="PTHR43209:SF1">
    <property type="entry name" value="TRNA SULFURTRANSFERASE"/>
    <property type="match status" value="1"/>
</dbReference>
<dbReference type="Pfam" id="PF02568">
    <property type="entry name" value="ThiI"/>
    <property type="match status" value="1"/>
</dbReference>
<dbReference type="Pfam" id="PF22025">
    <property type="entry name" value="ThiI_fer"/>
    <property type="match status" value="1"/>
</dbReference>
<dbReference type="Pfam" id="PF02926">
    <property type="entry name" value="THUMP"/>
    <property type="match status" value="1"/>
</dbReference>
<dbReference type="SMART" id="SM00981">
    <property type="entry name" value="THUMP"/>
    <property type="match status" value="1"/>
</dbReference>
<dbReference type="SUPFAM" id="SSF52402">
    <property type="entry name" value="Adenine nucleotide alpha hydrolases-like"/>
    <property type="match status" value="1"/>
</dbReference>
<dbReference type="SUPFAM" id="SSF143437">
    <property type="entry name" value="THUMP domain-like"/>
    <property type="match status" value="1"/>
</dbReference>
<dbReference type="PROSITE" id="PS51165">
    <property type="entry name" value="THUMP"/>
    <property type="match status" value="1"/>
</dbReference>
<gene>
    <name evidence="1" type="primary">thiI</name>
    <name type="ordered locus">SP70585_0919</name>
</gene>
<evidence type="ECO:0000255" key="1">
    <source>
        <dbReference type="HAMAP-Rule" id="MF_00021"/>
    </source>
</evidence>
<organism>
    <name type="scientific">Streptococcus pneumoniae (strain 70585)</name>
    <dbReference type="NCBI Taxonomy" id="488221"/>
    <lineage>
        <taxon>Bacteria</taxon>
        <taxon>Bacillati</taxon>
        <taxon>Bacillota</taxon>
        <taxon>Bacilli</taxon>
        <taxon>Lactobacillales</taxon>
        <taxon>Streptococcaceae</taxon>
        <taxon>Streptococcus</taxon>
    </lineage>
</organism>
<comment type="function">
    <text evidence="1">Catalyzes the ATP-dependent transfer of a sulfur to tRNA to produce 4-thiouridine in position 8 of tRNAs, which functions as a near-UV photosensor. Also catalyzes the transfer of sulfur to the sulfur carrier protein ThiS, forming ThiS-thiocarboxylate. This is a step in the synthesis of thiazole, in the thiamine biosynthesis pathway. The sulfur is donated as persulfide by IscS.</text>
</comment>
<comment type="catalytic activity">
    <reaction evidence="1">
        <text>[ThiI sulfur-carrier protein]-S-sulfanyl-L-cysteine + a uridine in tRNA + 2 reduced [2Fe-2S]-[ferredoxin] + ATP + H(+) = [ThiI sulfur-carrier protein]-L-cysteine + a 4-thiouridine in tRNA + 2 oxidized [2Fe-2S]-[ferredoxin] + AMP + diphosphate</text>
        <dbReference type="Rhea" id="RHEA:24176"/>
        <dbReference type="Rhea" id="RHEA-COMP:10000"/>
        <dbReference type="Rhea" id="RHEA-COMP:10001"/>
        <dbReference type="Rhea" id="RHEA-COMP:13337"/>
        <dbReference type="Rhea" id="RHEA-COMP:13338"/>
        <dbReference type="Rhea" id="RHEA-COMP:13339"/>
        <dbReference type="Rhea" id="RHEA-COMP:13340"/>
        <dbReference type="ChEBI" id="CHEBI:15378"/>
        <dbReference type="ChEBI" id="CHEBI:29950"/>
        <dbReference type="ChEBI" id="CHEBI:30616"/>
        <dbReference type="ChEBI" id="CHEBI:33019"/>
        <dbReference type="ChEBI" id="CHEBI:33737"/>
        <dbReference type="ChEBI" id="CHEBI:33738"/>
        <dbReference type="ChEBI" id="CHEBI:61963"/>
        <dbReference type="ChEBI" id="CHEBI:65315"/>
        <dbReference type="ChEBI" id="CHEBI:136798"/>
        <dbReference type="ChEBI" id="CHEBI:456215"/>
        <dbReference type="EC" id="2.8.1.4"/>
    </reaction>
</comment>
<comment type="catalytic activity">
    <reaction evidence="1">
        <text>[ThiS sulfur-carrier protein]-C-terminal Gly-Gly-AMP + S-sulfanyl-L-cysteinyl-[cysteine desulfurase] + AH2 = [ThiS sulfur-carrier protein]-C-terminal-Gly-aminoethanethioate + L-cysteinyl-[cysteine desulfurase] + A + AMP + 2 H(+)</text>
        <dbReference type="Rhea" id="RHEA:43340"/>
        <dbReference type="Rhea" id="RHEA-COMP:12157"/>
        <dbReference type="Rhea" id="RHEA-COMP:12158"/>
        <dbReference type="Rhea" id="RHEA-COMP:12910"/>
        <dbReference type="Rhea" id="RHEA-COMP:19908"/>
        <dbReference type="ChEBI" id="CHEBI:13193"/>
        <dbReference type="ChEBI" id="CHEBI:15378"/>
        <dbReference type="ChEBI" id="CHEBI:17499"/>
        <dbReference type="ChEBI" id="CHEBI:29950"/>
        <dbReference type="ChEBI" id="CHEBI:61963"/>
        <dbReference type="ChEBI" id="CHEBI:90618"/>
        <dbReference type="ChEBI" id="CHEBI:232372"/>
        <dbReference type="ChEBI" id="CHEBI:456215"/>
    </reaction>
</comment>
<comment type="pathway">
    <text evidence="1">Cofactor biosynthesis; thiamine diphosphate biosynthesis.</text>
</comment>
<comment type="subcellular location">
    <subcellularLocation>
        <location evidence="1">Cytoplasm</location>
    </subcellularLocation>
</comment>
<comment type="similarity">
    <text evidence="1">Belongs to the ThiI family.</text>
</comment>
<feature type="chain" id="PRO_1000196933" description="Probable tRNA sulfurtransferase">
    <location>
        <begin position="1"/>
        <end position="404"/>
    </location>
</feature>
<feature type="domain" description="THUMP" evidence="1">
    <location>
        <begin position="60"/>
        <end position="165"/>
    </location>
</feature>
<feature type="binding site" evidence="1">
    <location>
        <begin position="183"/>
        <end position="184"/>
    </location>
    <ligand>
        <name>ATP</name>
        <dbReference type="ChEBI" id="CHEBI:30616"/>
    </ligand>
</feature>
<feature type="binding site" evidence="1">
    <location>
        <begin position="208"/>
        <end position="209"/>
    </location>
    <ligand>
        <name>ATP</name>
        <dbReference type="ChEBI" id="CHEBI:30616"/>
    </ligand>
</feature>
<feature type="binding site" evidence="1">
    <location>
        <position position="265"/>
    </location>
    <ligand>
        <name>ATP</name>
        <dbReference type="ChEBI" id="CHEBI:30616"/>
    </ligand>
</feature>
<feature type="binding site" evidence="1">
    <location>
        <position position="287"/>
    </location>
    <ligand>
        <name>ATP</name>
        <dbReference type="ChEBI" id="CHEBI:30616"/>
    </ligand>
</feature>
<feature type="binding site" evidence="1">
    <location>
        <position position="296"/>
    </location>
    <ligand>
        <name>ATP</name>
        <dbReference type="ChEBI" id="CHEBI:30616"/>
    </ligand>
</feature>
<protein>
    <recommendedName>
        <fullName evidence="1">Probable tRNA sulfurtransferase</fullName>
        <ecNumber evidence="1">2.8.1.4</ecNumber>
    </recommendedName>
    <alternativeName>
        <fullName evidence="1">Sulfur carrier protein ThiS sulfurtransferase</fullName>
    </alternativeName>
    <alternativeName>
        <fullName evidence="1">Thiamine biosynthesis protein ThiI</fullName>
    </alternativeName>
    <alternativeName>
        <fullName evidence="1">tRNA 4-thiouridine synthase</fullName>
    </alternativeName>
</protein>
<proteinExistence type="inferred from homology"/>
<sequence length="404" mass="45141">MQYSEIMIRYGELSTKGKNRMRFINKLRNNISDVLSIYPQVKVTADRDRAHAYLNGADYTAVAESLKQVFGIQNFSPVYKVEKSVEVLKSAVQEIMRDIYKEGMTFKISSKRSDHNFELDSRELNQTLGGAVFEAIPNVQVQMKSPDINLQVEIREEAAYLSYETIRGAGGLPVGTSGKGMLMLSGGIDSPVAGYLALKRGVDIEAVHFASPPYTSPGALKKAQDLTRKLTKFGGNIQFIEVPFTEIQEEIKAKAPEAYLMTLTRRFMMRITDRIREVRNGLVIINGESLGQVASQTLESMKAINAVTNTPIIRPVVTMDKLEIIDIAQEIDTFDISIQPFEDCCTIFAPDRPKTNPKIKNAEQYEARMDVEGLVERAVAGIMITEITPQAEKDEVDDLIDNLL</sequence>
<keyword id="KW-0067">ATP-binding</keyword>
<keyword id="KW-0963">Cytoplasm</keyword>
<keyword id="KW-0547">Nucleotide-binding</keyword>
<keyword id="KW-0694">RNA-binding</keyword>
<keyword id="KW-0784">Thiamine biosynthesis</keyword>
<keyword id="KW-0808">Transferase</keyword>
<keyword id="KW-0820">tRNA-binding</keyword>
<reference key="1">
    <citation type="journal article" date="2010" name="Genome Biol.">
        <title>Structure and dynamics of the pan-genome of Streptococcus pneumoniae and closely related species.</title>
        <authorList>
            <person name="Donati C."/>
            <person name="Hiller N.L."/>
            <person name="Tettelin H."/>
            <person name="Muzzi A."/>
            <person name="Croucher N.J."/>
            <person name="Angiuoli S.V."/>
            <person name="Oggioni M."/>
            <person name="Dunning Hotopp J.C."/>
            <person name="Hu F.Z."/>
            <person name="Riley D.R."/>
            <person name="Covacci A."/>
            <person name="Mitchell T.J."/>
            <person name="Bentley S.D."/>
            <person name="Kilian M."/>
            <person name="Ehrlich G.D."/>
            <person name="Rappuoli R."/>
            <person name="Moxon E.R."/>
            <person name="Masignani V."/>
        </authorList>
    </citation>
    <scope>NUCLEOTIDE SEQUENCE [LARGE SCALE GENOMIC DNA]</scope>
    <source>
        <strain>70585</strain>
    </source>
</reference>
<name>THII_STRP7</name>
<accession>C1C6L4</accession>